<feature type="chain" id="PRO_0000250947" description="NADH-quinone oxidoreductase subunit I">
    <location>
        <begin position="1"/>
        <end position="162"/>
    </location>
</feature>
<feature type="domain" description="4Fe-4S ferredoxin-type 1" evidence="1">
    <location>
        <begin position="53"/>
        <end position="83"/>
    </location>
</feature>
<feature type="domain" description="4Fe-4S ferredoxin-type 2" evidence="1">
    <location>
        <begin position="93"/>
        <end position="122"/>
    </location>
</feature>
<feature type="binding site" evidence="1">
    <location>
        <position position="63"/>
    </location>
    <ligand>
        <name>[4Fe-4S] cluster</name>
        <dbReference type="ChEBI" id="CHEBI:49883"/>
        <label>1</label>
    </ligand>
</feature>
<feature type="binding site" evidence="1">
    <location>
        <position position="66"/>
    </location>
    <ligand>
        <name>[4Fe-4S] cluster</name>
        <dbReference type="ChEBI" id="CHEBI:49883"/>
        <label>1</label>
    </ligand>
</feature>
<feature type="binding site" evidence="1">
    <location>
        <position position="69"/>
    </location>
    <ligand>
        <name>[4Fe-4S] cluster</name>
        <dbReference type="ChEBI" id="CHEBI:49883"/>
        <label>1</label>
    </ligand>
</feature>
<feature type="binding site" evidence="1">
    <location>
        <position position="73"/>
    </location>
    <ligand>
        <name>[4Fe-4S] cluster</name>
        <dbReference type="ChEBI" id="CHEBI:49883"/>
        <label>2</label>
    </ligand>
</feature>
<feature type="binding site" evidence="1">
    <location>
        <position position="102"/>
    </location>
    <ligand>
        <name>[4Fe-4S] cluster</name>
        <dbReference type="ChEBI" id="CHEBI:49883"/>
        <label>2</label>
    </ligand>
</feature>
<feature type="binding site" evidence="1">
    <location>
        <position position="105"/>
    </location>
    <ligand>
        <name>[4Fe-4S] cluster</name>
        <dbReference type="ChEBI" id="CHEBI:49883"/>
        <label>2</label>
    </ligand>
</feature>
<feature type="binding site" evidence="1">
    <location>
        <position position="108"/>
    </location>
    <ligand>
        <name>[4Fe-4S] cluster</name>
        <dbReference type="ChEBI" id="CHEBI:49883"/>
        <label>2</label>
    </ligand>
</feature>
<feature type="binding site" evidence="1">
    <location>
        <position position="112"/>
    </location>
    <ligand>
        <name>[4Fe-4S] cluster</name>
        <dbReference type="ChEBI" id="CHEBI:49883"/>
        <label>1</label>
    </ligand>
</feature>
<protein>
    <recommendedName>
        <fullName evidence="1">NADH-quinone oxidoreductase subunit I</fullName>
        <ecNumber evidence="1">7.1.1.-</ecNumber>
    </recommendedName>
    <alternativeName>
        <fullName evidence="1">NADH dehydrogenase I subunit I</fullName>
    </alternativeName>
    <alternativeName>
        <fullName evidence="1">NDH-1 subunit I</fullName>
    </alternativeName>
</protein>
<gene>
    <name evidence="1" type="primary">nuoI</name>
    <name type="ordered locus">Tbd_1150</name>
</gene>
<dbReference type="EC" id="7.1.1.-" evidence="1"/>
<dbReference type="EMBL" id="CP000116">
    <property type="protein sequence ID" value="AAZ97103.1"/>
    <property type="molecule type" value="Genomic_DNA"/>
</dbReference>
<dbReference type="RefSeq" id="WP_011311662.1">
    <property type="nucleotide sequence ID" value="NC_007404.1"/>
</dbReference>
<dbReference type="SMR" id="Q3SJP9"/>
<dbReference type="STRING" id="292415.Tbd_1150"/>
<dbReference type="KEGG" id="tbd:Tbd_1150"/>
<dbReference type="eggNOG" id="COG1143">
    <property type="taxonomic scope" value="Bacteria"/>
</dbReference>
<dbReference type="HOGENOM" id="CLU_067218_5_1_4"/>
<dbReference type="OrthoDB" id="9808559at2"/>
<dbReference type="Proteomes" id="UP000008291">
    <property type="component" value="Chromosome"/>
</dbReference>
<dbReference type="GO" id="GO:0005886">
    <property type="term" value="C:plasma membrane"/>
    <property type="evidence" value="ECO:0007669"/>
    <property type="project" value="UniProtKB-SubCell"/>
</dbReference>
<dbReference type="GO" id="GO:0051539">
    <property type="term" value="F:4 iron, 4 sulfur cluster binding"/>
    <property type="evidence" value="ECO:0007669"/>
    <property type="project" value="UniProtKB-KW"/>
</dbReference>
<dbReference type="GO" id="GO:0005506">
    <property type="term" value="F:iron ion binding"/>
    <property type="evidence" value="ECO:0007669"/>
    <property type="project" value="UniProtKB-UniRule"/>
</dbReference>
<dbReference type="GO" id="GO:0050136">
    <property type="term" value="F:NADH:ubiquinone reductase (non-electrogenic) activity"/>
    <property type="evidence" value="ECO:0007669"/>
    <property type="project" value="UniProtKB-UniRule"/>
</dbReference>
<dbReference type="GO" id="GO:0048038">
    <property type="term" value="F:quinone binding"/>
    <property type="evidence" value="ECO:0007669"/>
    <property type="project" value="UniProtKB-KW"/>
</dbReference>
<dbReference type="GO" id="GO:0009060">
    <property type="term" value="P:aerobic respiration"/>
    <property type="evidence" value="ECO:0007669"/>
    <property type="project" value="TreeGrafter"/>
</dbReference>
<dbReference type="FunFam" id="3.30.70.3270:FF:000003">
    <property type="entry name" value="NADH-quinone oxidoreductase subunit I"/>
    <property type="match status" value="1"/>
</dbReference>
<dbReference type="Gene3D" id="3.30.70.3270">
    <property type="match status" value="1"/>
</dbReference>
<dbReference type="HAMAP" id="MF_01351">
    <property type="entry name" value="NDH1_NuoI"/>
    <property type="match status" value="1"/>
</dbReference>
<dbReference type="InterPro" id="IPR017896">
    <property type="entry name" value="4Fe4S_Fe-S-bd"/>
</dbReference>
<dbReference type="InterPro" id="IPR017900">
    <property type="entry name" value="4Fe4S_Fe_S_CS"/>
</dbReference>
<dbReference type="InterPro" id="IPR010226">
    <property type="entry name" value="NADH_quinone_OxRdtase_chainI"/>
</dbReference>
<dbReference type="NCBIfam" id="TIGR01971">
    <property type="entry name" value="NuoI"/>
    <property type="match status" value="1"/>
</dbReference>
<dbReference type="NCBIfam" id="NF004538">
    <property type="entry name" value="PRK05888.1-4"/>
    <property type="match status" value="1"/>
</dbReference>
<dbReference type="NCBIfam" id="NF004539">
    <property type="entry name" value="PRK05888.1-5"/>
    <property type="match status" value="1"/>
</dbReference>
<dbReference type="PANTHER" id="PTHR10849:SF20">
    <property type="entry name" value="NADH DEHYDROGENASE [UBIQUINONE] IRON-SULFUR PROTEIN 8, MITOCHONDRIAL"/>
    <property type="match status" value="1"/>
</dbReference>
<dbReference type="PANTHER" id="PTHR10849">
    <property type="entry name" value="NADH DEHYDROGENASE UBIQUINONE IRON-SULFUR PROTEIN 8, MITOCHONDRIAL"/>
    <property type="match status" value="1"/>
</dbReference>
<dbReference type="Pfam" id="PF12838">
    <property type="entry name" value="Fer4_7"/>
    <property type="match status" value="1"/>
</dbReference>
<dbReference type="SUPFAM" id="SSF54862">
    <property type="entry name" value="4Fe-4S ferredoxins"/>
    <property type="match status" value="1"/>
</dbReference>
<dbReference type="PROSITE" id="PS00198">
    <property type="entry name" value="4FE4S_FER_1"/>
    <property type="match status" value="2"/>
</dbReference>
<dbReference type="PROSITE" id="PS51379">
    <property type="entry name" value="4FE4S_FER_2"/>
    <property type="match status" value="2"/>
</dbReference>
<proteinExistence type="inferred from homology"/>
<organism>
    <name type="scientific">Thiobacillus denitrificans (strain ATCC 25259 / T1)</name>
    <dbReference type="NCBI Taxonomy" id="292415"/>
    <lineage>
        <taxon>Bacteria</taxon>
        <taxon>Pseudomonadati</taxon>
        <taxon>Pseudomonadota</taxon>
        <taxon>Betaproteobacteria</taxon>
        <taxon>Nitrosomonadales</taxon>
        <taxon>Thiobacillaceae</taxon>
        <taxon>Thiobacillus</taxon>
    </lineage>
</organism>
<evidence type="ECO:0000255" key="1">
    <source>
        <dbReference type="HAMAP-Rule" id="MF_01351"/>
    </source>
</evidence>
<keyword id="KW-0004">4Fe-4S</keyword>
<keyword id="KW-0997">Cell inner membrane</keyword>
<keyword id="KW-1003">Cell membrane</keyword>
<keyword id="KW-0408">Iron</keyword>
<keyword id="KW-0411">Iron-sulfur</keyword>
<keyword id="KW-0472">Membrane</keyword>
<keyword id="KW-0479">Metal-binding</keyword>
<keyword id="KW-0520">NAD</keyword>
<keyword id="KW-0874">Quinone</keyword>
<keyword id="KW-1185">Reference proteome</keyword>
<keyword id="KW-0677">Repeat</keyword>
<keyword id="KW-1278">Translocase</keyword>
<keyword id="KW-0830">Ubiquinone</keyword>
<accession>Q3SJP9</accession>
<sequence length="162" mass="18695">MRRITHFFGSLFLVELLRGMMLTGRHLFARKVTVQFPEEKTPQSPRFRGLHALRRYPNGEERCIACKLCEAVCPALAITIDSEQRADGTRRTTRYDIDLTKCIFCGFCEESCPVDSIVETRILEYHGEQRGDLIYTKPMLLAIGDKYEAQIAQDRAQDAKYR</sequence>
<comment type="function">
    <text evidence="1">NDH-1 shuttles electrons from NADH, via FMN and iron-sulfur (Fe-S) centers, to quinones in the respiratory chain. The immediate electron acceptor for the enzyme in this species is believed to be ubiquinone. Couples the redox reaction to proton translocation (for every two electrons transferred, four hydrogen ions are translocated across the cytoplasmic membrane), and thus conserves the redox energy in a proton gradient.</text>
</comment>
<comment type="catalytic activity">
    <reaction evidence="1">
        <text>a quinone + NADH + 5 H(+)(in) = a quinol + NAD(+) + 4 H(+)(out)</text>
        <dbReference type="Rhea" id="RHEA:57888"/>
        <dbReference type="ChEBI" id="CHEBI:15378"/>
        <dbReference type="ChEBI" id="CHEBI:24646"/>
        <dbReference type="ChEBI" id="CHEBI:57540"/>
        <dbReference type="ChEBI" id="CHEBI:57945"/>
        <dbReference type="ChEBI" id="CHEBI:132124"/>
    </reaction>
</comment>
<comment type="cofactor">
    <cofactor evidence="1">
        <name>[4Fe-4S] cluster</name>
        <dbReference type="ChEBI" id="CHEBI:49883"/>
    </cofactor>
    <text evidence="1">Binds 2 [4Fe-4S] clusters per subunit.</text>
</comment>
<comment type="subunit">
    <text evidence="1">NDH-1 is composed of 14 different subunits. Subunits NuoA, H, J, K, L, M, N constitute the membrane sector of the complex.</text>
</comment>
<comment type="subcellular location">
    <subcellularLocation>
        <location evidence="1">Cell inner membrane</location>
        <topology evidence="1">Peripheral membrane protein</topology>
    </subcellularLocation>
</comment>
<comment type="similarity">
    <text evidence="1">Belongs to the complex I 23 kDa subunit family.</text>
</comment>
<reference key="1">
    <citation type="journal article" date="2006" name="J. Bacteriol.">
        <title>The genome sequence of the obligately chemolithoautotrophic, facultatively anaerobic bacterium Thiobacillus denitrificans.</title>
        <authorList>
            <person name="Beller H.R."/>
            <person name="Chain P.S."/>
            <person name="Letain T.E."/>
            <person name="Chakicherla A."/>
            <person name="Larimer F.W."/>
            <person name="Richardson P.M."/>
            <person name="Coleman M.A."/>
            <person name="Wood A.P."/>
            <person name="Kelly D.P."/>
        </authorList>
    </citation>
    <scope>NUCLEOTIDE SEQUENCE [LARGE SCALE GENOMIC DNA]</scope>
    <source>
        <strain>ATCC 25259 / T1</strain>
    </source>
</reference>
<name>NUOI_THIDA</name>